<evidence type="ECO:0000255" key="1">
    <source>
        <dbReference type="HAMAP-Rule" id="MF_00535"/>
    </source>
</evidence>
<name>CYNS_ECOHS</name>
<protein>
    <recommendedName>
        <fullName evidence="1">Cyanate hydratase</fullName>
        <shortName evidence="1">Cyanase</shortName>
        <ecNumber evidence="1">4.2.1.104</ecNumber>
    </recommendedName>
    <alternativeName>
        <fullName evidence="1">Cyanate hydrolase</fullName>
    </alternativeName>
    <alternativeName>
        <fullName evidence="1">Cyanate lyase</fullName>
    </alternativeName>
</protein>
<gene>
    <name evidence="1" type="primary">cynS</name>
    <name type="ordered locus">EcHS_A0405</name>
</gene>
<reference key="1">
    <citation type="journal article" date="2008" name="J. Bacteriol.">
        <title>The pangenome structure of Escherichia coli: comparative genomic analysis of E. coli commensal and pathogenic isolates.</title>
        <authorList>
            <person name="Rasko D.A."/>
            <person name="Rosovitz M.J."/>
            <person name="Myers G.S.A."/>
            <person name="Mongodin E.F."/>
            <person name="Fricke W.F."/>
            <person name="Gajer P."/>
            <person name="Crabtree J."/>
            <person name="Sebaihia M."/>
            <person name="Thomson N.R."/>
            <person name="Chaudhuri R."/>
            <person name="Henderson I.R."/>
            <person name="Sperandio V."/>
            <person name="Ravel J."/>
        </authorList>
    </citation>
    <scope>NUCLEOTIDE SEQUENCE [LARGE SCALE GENOMIC DNA]</scope>
    <source>
        <strain>HS</strain>
    </source>
</reference>
<keyword id="KW-0456">Lyase</keyword>
<organism>
    <name type="scientific">Escherichia coli O9:H4 (strain HS)</name>
    <dbReference type="NCBI Taxonomy" id="331112"/>
    <lineage>
        <taxon>Bacteria</taxon>
        <taxon>Pseudomonadati</taxon>
        <taxon>Pseudomonadota</taxon>
        <taxon>Gammaproteobacteria</taxon>
        <taxon>Enterobacterales</taxon>
        <taxon>Enterobacteriaceae</taxon>
        <taxon>Escherichia</taxon>
    </lineage>
</organism>
<dbReference type="EC" id="4.2.1.104" evidence="1"/>
<dbReference type="EMBL" id="CP000802">
    <property type="protein sequence ID" value="ABV04792.1"/>
    <property type="molecule type" value="Genomic_DNA"/>
</dbReference>
<dbReference type="RefSeq" id="WP_000616239.1">
    <property type="nucleotide sequence ID" value="NC_009800.1"/>
</dbReference>
<dbReference type="SMR" id="A7ZWY8"/>
<dbReference type="KEGG" id="ecx:EcHS_A0405"/>
<dbReference type="HOGENOM" id="CLU_103452_1_1_6"/>
<dbReference type="GO" id="GO:0008824">
    <property type="term" value="F:cyanate hydratase activity"/>
    <property type="evidence" value="ECO:0007669"/>
    <property type="project" value="UniProtKB-UniRule"/>
</dbReference>
<dbReference type="GO" id="GO:0003677">
    <property type="term" value="F:DNA binding"/>
    <property type="evidence" value="ECO:0007669"/>
    <property type="project" value="InterPro"/>
</dbReference>
<dbReference type="GO" id="GO:0009439">
    <property type="term" value="P:cyanate metabolic process"/>
    <property type="evidence" value="ECO:0007669"/>
    <property type="project" value="UniProtKB-UniRule"/>
</dbReference>
<dbReference type="CDD" id="cd00559">
    <property type="entry name" value="Cyanase_C"/>
    <property type="match status" value="1"/>
</dbReference>
<dbReference type="FunFam" id="3.30.1160.10:FF:000001">
    <property type="entry name" value="Cyanate hydratase"/>
    <property type="match status" value="1"/>
</dbReference>
<dbReference type="Gene3D" id="3.30.1160.10">
    <property type="entry name" value="Cyanate lyase, C-terminal domain"/>
    <property type="match status" value="1"/>
</dbReference>
<dbReference type="Gene3D" id="1.10.260.40">
    <property type="entry name" value="lambda repressor-like DNA-binding domains"/>
    <property type="match status" value="1"/>
</dbReference>
<dbReference type="HAMAP" id="MF_00535">
    <property type="entry name" value="Cyanate_hydrat"/>
    <property type="match status" value="1"/>
</dbReference>
<dbReference type="InterPro" id="IPR008076">
    <property type="entry name" value="Cyanase"/>
</dbReference>
<dbReference type="InterPro" id="IPR003712">
    <property type="entry name" value="Cyanate_lyase_C"/>
</dbReference>
<dbReference type="InterPro" id="IPR036581">
    <property type="entry name" value="Cyanate_lyase_C_sf"/>
</dbReference>
<dbReference type="InterPro" id="IPR048564">
    <property type="entry name" value="CYNS_N"/>
</dbReference>
<dbReference type="InterPro" id="IPR010982">
    <property type="entry name" value="Lambda_DNA-bd_dom_sf"/>
</dbReference>
<dbReference type="NCBIfam" id="TIGR00673">
    <property type="entry name" value="cynS"/>
    <property type="match status" value="1"/>
</dbReference>
<dbReference type="NCBIfam" id="NF002773">
    <property type="entry name" value="PRK02866.1"/>
    <property type="match status" value="1"/>
</dbReference>
<dbReference type="PANTHER" id="PTHR34186">
    <property type="entry name" value="CYANATE HYDRATASE"/>
    <property type="match status" value="1"/>
</dbReference>
<dbReference type="PANTHER" id="PTHR34186:SF2">
    <property type="entry name" value="CYANATE HYDRATASE"/>
    <property type="match status" value="1"/>
</dbReference>
<dbReference type="Pfam" id="PF02560">
    <property type="entry name" value="Cyanate_lyase"/>
    <property type="match status" value="1"/>
</dbReference>
<dbReference type="Pfam" id="PF21291">
    <property type="entry name" value="CYNS_N"/>
    <property type="match status" value="1"/>
</dbReference>
<dbReference type="PIRSF" id="PIRSF001263">
    <property type="entry name" value="Cyanate_hydratas"/>
    <property type="match status" value="1"/>
</dbReference>
<dbReference type="PRINTS" id="PR01693">
    <property type="entry name" value="CYANASE"/>
</dbReference>
<dbReference type="SMART" id="SM01116">
    <property type="entry name" value="Cyanate_lyase"/>
    <property type="match status" value="1"/>
</dbReference>
<dbReference type="SUPFAM" id="SSF55234">
    <property type="entry name" value="Cyanase C-terminal domain"/>
    <property type="match status" value="1"/>
</dbReference>
<dbReference type="SUPFAM" id="SSF47413">
    <property type="entry name" value="lambda repressor-like DNA-binding domains"/>
    <property type="match status" value="1"/>
</dbReference>
<proteinExistence type="inferred from homology"/>
<accession>A7ZWY8</accession>
<comment type="function">
    <text evidence="1">Catalyzes the reaction of cyanate with bicarbonate to produce ammonia and carbon dioxide.</text>
</comment>
<comment type="catalytic activity">
    <reaction evidence="1">
        <text>cyanate + hydrogencarbonate + 3 H(+) = NH4(+) + 2 CO2</text>
        <dbReference type="Rhea" id="RHEA:11120"/>
        <dbReference type="ChEBI" id="CHEBI:15378"/>
        <dbReference type="ChEBI" id="CHEBI:16526"/>
        <dbReference type="ChEBI" id="CHEBI:17544"/>
        <dbReference type="ChEBI" id="CHEBI:28938"/>
        <dbReference type="ChEBI" id="CHEBI:29195"/>
        <dbReference type="EC" id="4.2.1.104"/>
    </reaction>
</comment>
<comment type="similarity">
    <text evidence="1">Belongs to the cyanase family.</text>
</comment>
<feature type="chain" id="PRO_1000061027" description="Cyanate hydratase">
    <location>
        <begin position="1"/>
        <end position="156"/>
    </location>
</feature>
<feature type="active site" evidence="1">
    <location>
        <position position="96"/>
    </location>
</feature>
<feature type="active site" evidence="1">
    <location>
        <position position="99"/>
    </location>
</feature>
<feature type="active site" evidence="1">
    <location>
        <position position="122"/>
    </location>
</feature>
<sequence length="156" mass="17007">MIQSQINRNIRLDLADAILLSKAKKDLSFAEIADGTGLAEAFVTAALLGQQALPADAARLVGAKLDLDEDAILLLQMIPLRGCIDDRIPTDPTMHRFYEMLQVYGTTLKALVHEKFGDGIISAINFKLDVKKVADPEGGERAVITLDGKYLPTKPF</sequence>